<accession>B3EWE0</accession>
<comment type="function">
    <text evidence="7">Involved in oxygen transport from the lung to the various peripheral tissues.</text>
</comment>
<comment type="subunit">
    <text evidence="7">Heterotetramer of two alpha chains and two beta chains.</text>
</comment>
<comment type="tissue specificity">
    <text evidence="7">Red blood cells.</text>
</comment>
<comment type="similarity">
    <text evidence="4">Belongs to the globin family.</text>
</comment>
<evidence type="ECO:0000250" key="1">
    <source>
        <dbReference type="UniProtKB" id="P02070"/>
    </source>
</evidence>
<evidence type="ECO:0000250" key="2">
    <source>
        <dbReference type="UniProtKB" id="P02086"/>
    </source>
</evidence>
<evidence type="ECO:0000250" key="3">
    <source>
        <dbReference type="UniProtKB" id="P68871"/>
    </source>
</evidence>
<evidence type="ECO:0000255" key="4">
    <source>
        <dbReference type="PROSITE-ProRule" id="PRU00238"/>
    </source>
</evidence>
<evidence type="ECO:0000269" key="5">
    <source>
    </source>
</evidence>
<evidence type="ECO:0000303" key="6">
    <source>
    </source>
</evidence>
<evidence type="ECO:0000305" key="7"/>
<sequence length="146" mass="15869">VHLTADEKVSLSSLWGKVNPDELGGEALGRLLLVYPWTQRFFDSFGDLSSAVAVMGNAKVKAHGKKVLDSFSDGLKHLDNLKGTFASLSELHCDKLHVDPENFKLLGNVLVLVLAHHLGKEFTPQAQGTFQKVVAGVANALAHKYH</sequence>
<feature type="chain" id="PRO_0000415601" description="Hemoglobin subunit beta">
    <location>
        <begin position="1"/>
        <end position="146"/>
    </location>
</feature>
<feature type="domain" description="Globin" evidence="4">
    <location>
        <begin position="2"/>
        <end position="146"/>
    </location>
</feature>
<feature type="binding site" description="distal binding residue" evidence="1 4">
    <location>
        <position position="63"/>
    </location>
    <ligand>
        <name>heme b</name>
        <dbReference type="ChEBI" id="CHEBI:60344"/>
    </ligand>
    <ligandPart>
        <name>Fe</name>
        <dbReference type="ChEBI" id="CHEBI:18248"/>
    </ligandPart>
</feature>
<feature type="binding site" description="proximal binding residue" evidence="1 4">
    <location>
        <position position="92"/>
    </location>
    <ligand>
        <name>heme b</name>
        <dbReference type="ChEBI" id="CHEBI:60344"/>
    </ligand>
    <ligandPart>
        <name>Fe</name>
        <dbReference type="ChEBI" id="CHEBI:18248"/>
    </ligandPart>
</feature>
<feature type="modified residue" description="N-acetylvaline" evidence="2">
    <location>
        <position position="1"/>
    </location>
</feature>
<feature type="modified residue" description="Phosphoserine" evidence="3">
    <location>
        <position position="44"/>
    </location>
</feature>
<feature type="modified residue" description="N6-acetyllysine" evidence="3">
    <location>
        <position position="59"/>
    </location>
</feature>
<feature type="modified residue" description="N6-acetyllysine" evidence="3">
    <location>
        <position position="82"/>
    </location>
</feature>
<feature type="modified residue" description="S-nitrosocysteine" evidence="3">
    <location>
        <position position="93"/>
    </location>
</feature>
<feature type="modified residue" description="N6-acetyllysine" evidence="3">
    <location>
        <position position="144"/>
    </location>
</feature>
<feature type="unsure residue" description="L or I" evidence="5">
    <location>
        <position position="3"/>
    </location>
</feature>
<feature type="unsure residue" description="L or I" evidence="5">
    <location>
        <position position="11"/>
    </location>
</feature>
<feature type="unsure residue" description="L or I" evidence="5">
    <location>
        <position position="14"/>
    </location>
</feature>
<feature type="unsure residue" description="L or I" evidence="5">
    <location>
        <position position="23"/>
    </location>
</feature>
<feature type="unsure residue" description="L or I" evidence="5">
    <location>
        <position position="28"/>
    </location>
</feature>
<feature type="unsure residue" description="L or I" evidence="5">
    <location>
        <position position="31"/>
    </location>
</feature>
<feature type="unsure residue" description="L or I" evidence="5">
    <location>
        <position position="32"/>
    </location>
</feature>
<feature type="unsure residue" description="L or I" evidence="5">
    <location>
        <position position="33"/>
    </location>
</feature>
<feature type="unsure residue" description="L or I" evidence="5">
    <location>
        <position position="48"/>
    </location>
</feature>
<feature type="unsure residue" description="L or I" evidence="5">
    <location>
        <position position="68"/>
    </location>
</feature>
<feature type="unsure residue" description="L or I" evidence="5">
    <location>
        <position position="75"/>
    </location>
</feature>
<feature type="unsure residue" description="L or I" evidence="5">
    <location>
        <position position="78"/>
    </location>
</feature>
<feature type="unsure residue" description="L or I" evidence="5">
    <location>
        <position position="81"/>
    </location>
</feature>
<feature type="unsure residue" description="L or I" evidence="5">
    <location>
        <position position="88"/>
    </location>
</feature>
<feature type="unsure residue" description="L or I" evidence="5">
    <location>
        <position position="91"/>
    </location>
</feature>
<feature type="unsure residue" description="L or I" evidence="5">
    <location>
        <position position="96"/>
    </location>
</feature>
<feature type="unsure residue" description="L or I" evidence="5">
    <location>
        <position position="105"/>
    </location>
</feature>
<feature type="unsure residue" description="L or I" evidence="5">
    <location>
        <position position="106"/>
    </location>
</feature>
<feature type="unsure residue" description="L or I" evidence="5">
    <location>
        <position position="110"/>
    </location>
</feature>
<feature type="unsure residue" description="L or I" evidence="5">
    <location>
        <position position="112"/>
    </location>
</feature>
<feature type="unsure residue" description="L or I" evidence="5">
    <location>
        <position position="114"/>
    </location>
</feature>
<feature type="unsure residue" description="L or I" evidence="5">
    <location>
        <position position="118"/>
    </location>
</feature>
<feature type="unsure residue" description="L or I" evidence="5">
    <location>
        <position position="141"/>
    </location>
</feature>
<name>HBB_TAMST</name>
<organism>
    <name type="scientific">Tamias striatus</name>
    <name type="common">Eastern chipmunk</name>
    <name type="synonym">Sciurus striatus</name>
    <dbReference type="NCBI Taxonomy" id="45474"/>
    <lineage>
        <taxon>Eukaryota</taxon>
        <taxon>Metazoa</taxon>
        <taxon>Chordata</taxon>
        <taxon>Craniata</taxon>
        <taxon>Vertebrata</taxon>
        <taxon>Euteleostomi</taxon>
        <taxon>Mammalia</taxon>
        <taxon>Eutheria</taxon>
        <taxon>Euarchontoglires</taxon>
        <taxon>Glires</taxon>
        <taxon>Rodentia</taxon>
        <taxon>Sciuromorpha</taxon>
        <taxon>Sciuridae</taxon>
        <taxon>Xerinae</taxon>
        <taxon>Marmotini</taxon>
        <taxon>Tamias</taxon>
    </lineage>
</organism>
<proteinExistence type="evidence at protein level"/>
<keyword id="KW-0007">Acetylation</keyword>
<keyword id="KW-0903">Direct protein sequencing</keyword>
<keyword id="KW-0349">Heme</keyword>
<keyword id="KW-0408">Iron</keyword>
<keyword id="KW-0479">Metal-binding</keyword>
<keyword id="KW-0561">Oxygen transport</keyword>
<keyword id="KW-0597">Phosphoprotein</keyword>
<keyword id="KW-0702">S-nitrosylation</keyword>
<keyword id="KW-0813">Transport</keyword>
<protein>
    <recommendedName>
        <fullName evidence="6">Hemoglobin subunit beta</fullName>
    </recommendedName>
</protein>
<reference evidence="7" key="1">
    <citation type="journal article" date="2012" name="Biol. Chem.">
        <title>Development of a host blood meal database: de novo sequencing of hemoglobin from nine small mammals using mass spectrometry.</title>
        <authorList>
            <person name="Laskay U.A."/>
            <person name="Burg J."/>
            <person name="Kaleta E.J."/>
            <person name="Vilcins I.M."/>
            <person name="Telford Iii S.R."/>
            <person name="Barbour A.G."/>
            <person name="Wysocki V.H."/>
        </authorList>
    </citation>
    <scope>PROTEIN SEQUENCE</scope>
    <source>
        <tissue evidence="5">Erythrocyte</tissue>
    </source>
</reference>
<dbReference type="SMR" id="B3EWE0"/>
<dbReference type="GO" id="GO:0072562">
    <property type="term" value="C:blood microparticle"/>
    <property type="evidence" value="ECO:0007669"/>
    <property type="project" value="TreeGrafter"/>
</dbReference>
<dbReference type="GO" id="GO:0031838">
    <property type="term" value="C:haptoglobin-hemoglobin complex"/>
    <property type="evidence" value="ECO:0007669"/>
    <property type="project" value="TreeGrafter"/>
</dbReference>
<dbReference type="GO" id="GO:0005833">
    <property type="term" value="C:hemoglobin complex"/>
    <property type="evidence" value="ECO:0007669"/>
    <property type="project" value="InterPro"/>
</dbReference>
<dbReference type="GO" id="GO:0031720">
    <property type="term" value="F:haptoglobin binding"/>
    <property type="evidence" value="ECO:0007669"/>
    <property type="project" value="TreeGrafter"/>
</dbReference>
<dbReference type="GO" id="GO:0020037">
    <property type="term" value="F:heme binding"/>
    <property type="evidence" value="ECO:0007669"/>
    <property type="project" value="InterPro"/>
</dbReference>
<dbReference type="GO" id="GO:0031721">
    <property type="term" value="F:hemoglobin alpha binding"/>
    <property type="evidence" value="ECO:0007669"/>
    <property type="project" value="TreeGrafter"/>
</dbReference>
<dbReference type="GO" id="GO:0046872">
    <property type="term" value="F:metal ion binding"/>
    <property type="evidence" value="ECO:0007669"/>
    <property type="project" value="UniProtKB-KW"/>
</dbReference>
<dbReference type="GO" id="GO:0043177">
    <property type="term" value="F:organic acid binding"/>
    <property type="evidence" value="ECO:0007669"/>
    <property type="project" value="TreeGrafter"/>
</dbReference>
<dbReference type="GO" id="GO:0019825">
    <property type="term" value="F:oxygen binding"/>
    <property type="evidence" value="ECO:0007669"/>
    <property type="project" value="InterPro"/>
</dbReference>
<dbReference type="GO" id="GO:0005344">
    <property type="term" value="F:oxygen carrier activity"/>
    <property type="evidence" value="ECO:0007669"/>
    <property type="project" value="UniProtKB-KW"/>
</dbReference>
<dbReference type="GO" id="GO:0004601">
    <property type="term" value="F:peroxidase activity"/>
    <property type="evidence" value="ECO:0007669"/>
    <property type="project" value="TreeGrafter"/>
</dbReference>
<dbReference type="GO" id="GO:0042744">
    <property type="term" value="P:hydrogen peroxide catabolic process"/>
    <property type="evidence" value="ECO:0007669"/>
    <property type="project" value="TreeGrafter"/>
</dbReference>
<dbReference type="CDD" id="cd08925">
    <property type="entry name" value="Hb-beta-like"/>
    <property type="match status" value="1"/>
</dbReference>
<dbReference type="FunFam" id="1.10.490.10:FF:000001">
    <property type="entry name" value="Hemoglobin subunit beta"/>
    <property type="match status" value="1"/>
</dbReference>
<dbReference type="Gene3D" id="1.10.490.10">
    <property type="entry name" value="Globins"/>
    <property type="match status" value="1"/>
</dbReference>
<dbReference type="InterPro" id="IPR000971">
    <property type="entry name" value="Globin"/>
</dbReference>
<dbReference type="InterPro" id="IPR009050">
    <property type="entry name" value="Globin-like_sf"/>
</dbReference>
<dbReference type="InterPro" id="IPR012292">
    <property type="entry name" value="Globin/Proto"/>
</dbReference>
<dbReference type="InterPro" id="IPR002337">
    <property type="entry name" value="Hemoglobin_b"/>
</dbReference>
<dbReference type="InterPro" id="IPR050056">
    <property type="entry name" value="Hemoglobin_oxygen_transport"/>
</dbReference>
<dbReference type="PANTHER" id="PTHR11442">
    <property type="entry name" value="HEMOGLOBIN FAMILY MEMBER"/>
    <property type="match status" value="1"/>
</dbReference>
<dbReference type="PANTHER" id="PTHR11442:SF42">
    <property type="entry name" value="HEMOGLOBIN SUBUNIT BETA"/>
    <property type="match status" value="1"/>
</dbReference>
<dbReference type="Pfam" id="PF00042">
    <property type="entry name" value="Globin"/>
    <property type="match status" value="1"/>
</dbReference>
<dbReference type="PRINTS" id="PR00814">
    <property type="entry name" value="BETAHAEM"/>
</dbReference>
<dbReference type="SUPFAM" id="SSF46458">
    <property type="entry name" value="Globin-like"/>
    <property type="match status" value="1"/>
</dbReference>
<dbReference type="PROSITE" id="PS01033">
    <property type="entry name" value="GLOBIN"/>
    <property type="match status" value="1"/>
</dbReference>